<protein>
    <recommendedName>
        <fullName>Superoxide dismutase [Mn], mitochondrial</fullName>
        <ecNumber>1.15.1.1</ecNumber>
    </recommendedName>
</protein>
<proteinExistence type="evidence at transcript level"/>
<accession>P28765</accession>
<evidence type="ECO:0000250" key="1"/>
<evidence type="ECO:0000305" key="2"/>
<dbReference type="EC" id="1.15.1.1"/>
<dbReference type="EMBL" id="X64063">
    <property type="protein sequence ID" value="CAA45419.1"/>
    <property type="molecule type" value="mRNA"/>
</dbReference>
<dbReference type="PIR" id="S23659">
    <property type="entry name" value="S23659"/>
</dbReference>
<dbReference type="SMR" id="P28765"/>
<dbReference type="GO" id="GO:0005759">
    <property type="term" value="C:mitochondrial matrix"/>
    <property type="evidence" value="ECO:0007669"/>
    <property type="project" value="UniProtKB-SubCell"/>
</dbReference>
<dbReference type="GO" id="GO:0030145">
    <property type="term" value="F:manganese ion binding"/>
    <property type="evidence" value="ECO:0007669"/>
    <property type="project" value="TreeGrafter"/>
</dbReference>
<dbReference type="GO" id="GO:0004784">
    <property type="term" value="F:superoxide dismutase activity"/>
    <property type="evidence" value="ECO:0007669"/>
    <property type="project" value="UniProtKB-EC"/>
</dbReference>
<dbReference type="FunFam" id="1.10.287.990:FF:000001">
    <property type="entry name" value="Superoxide dismutase"/>
    <property type="match status" value="1"/>
</dbReference>
<dbReference type="Gene3D" id="1.10.287.990">
    <property type="entry name" value="Fe,Mn superoxide dismutase (SOD) domain"/>
    <property type="match status" value="1"/>
</dbReference>
<dbReference type="Gene3D" id="3.55.40.20">
    <property type="entry name" value="Iron/manganese superoxide dismutase, C-terminal domain"/>
    <property type="match status" value="1"/>
</dbReference>
<dbReference type="InterPro" id="IPR050265">
    <property type="entry name" value="Fe/Mn_Superoxide_Dismutase"/>
</dbReference>
<dbReference type="InterPro" id="IPR001189">
    <property type="entry name" value="Mn/Fe_SOD"/>
</dbReference>
<dbReference type="InterPro" id="IPR019832">
    <property type="entry name" value="Mn/Fe_SOD_C"/>
</dbReference>
<dbReference type="InterPro" id="IPR019831">
    <property type="entry name" value="Mn/Fe_SOD_N"/>
</dbReference>
<dbReference type="InterPro" id="IPR036324">
    <property type="entry name" value="Mn/Fe_SOD_N_sf"/>
</dbReference>
<dbReference type="InterPro" id="IPR036314">
    <property type="entry name" value="SOD_C_sf"/>
</dbReference>
<dbReference type="PANTHER" id="PTHR11404">
    <property type="entry name" value="SUPEROXIDE DISMUTASE 2"/>
    <property type="match status" value="1"/>
</dbReference>
<dbReference type="PANTHER" id="PTHR11404:SF6">
    <property type="entry name" value="SUPEROXIDE DISMUTASE [MN], MITOCHONDRIAL"/>
    <property type="match status" value="1"/>
</dbReference>
<dbReference type="Pfam" id="PF02777">
    <property type="entry name" value="Sod_Fe_C"/>
    <property type="match status" value="1"/>
</dbReference>
<dbReference type="Pfam" id="PF00081">
    <property type="entry name" value="Sod_Fe_N"/>
    <property type="match status" value="1"/>
</dbReference>
<dbReference type="PRINTS" id="PR01703">
    <property type="entry name" value="MNSODISMTASE"/>
</dbReference>
<dbReference type="SUPFAM" id="SSF54719">
    <property type="entry name" value="Fe,Mn superoxide dismutase (SOD), C-terminal domain"/>
    <property type="match status" value="1"/>
</dbReference>
<dbReference type="SUPFAM" id="SSF46609">
    <property type="entry name" value="Fe,Mn superoxide dismutase (SOD), N-terminal domain"/>
    <property type="match status" value="1"/>
</dbReference>
<sequence>HISEMIMQIHHTKHHQAYINNLKACTEKLKQAEQANDVAAMNALLPAIKFNGGGHINHTIFWTNMAPSAGGEPAGPVADAITKEFGSFQAFKDKFSTASVGVKGSGWGWLGYCPKNDKLAVATCQNQDPLQLTHGLIPLLGLDV</sequence>
<reference key="1">
    <citation type="journal article" date="1992" name="J. Mol. Evol.">
        <title>A comparison of evolutionary rates of the two major kinds of superoxide dismutase.</title>
        <authorList>
            <person name="Smith M.W."/>
            <person name="Doolittle R.F."/>
        </authorList>
    </citation>
    <scope>NUCLEOTIDE SEQUENCE [MRNA]</scope>
</reference>
<organism>
    <name type="scientific">Palinurus vulgaris</name>
    <name type="common">European spiny lobster</name>
    <dbReference type="NCBI Taxonomy" id="6733"/>
    <lineage>
        <taxon>Eukaryota</taxon>
        <taxon>Metazoa</taxon>
        <taxon>Ecdysozoa</taxon>
        <taxon>Arthropoda</taxon>
        <taxon>Crustacea</taxon>
        <taxon>Multicrustacea</taxon>
        <taxon>Malacostraca</taxon>
        <taxon>Eumalacostraca</taxon>
        <taxon>Eucarida</taxon>
        <taxon>Decapoda</taxon>
        <taxon>Pleocyemata</taxon>
        <taxon>Achelata</taxon>
        <taxon>Palinuroidea</taxon>
        <taxon>Palinuridae</taxon>
        <taxon>Palinurus</taxon>
    </lineage>
</organism>
<keyword id="KW-0464">Manganese</keyword>
<keyword id="KW-0479">Metal-binding</keyword>
<keyword id="KW-0496">Mitochondrion</keyword>
<keyword id="KW-0560">Oxidoreductase</keyword>
<name>SODM_PALVU</name>
<feature type="chain" id="PRO_0000159960" description="Superoxide dismutase [Mn], mitochondrial">
    <location>
        <begin position="1" status="less than"/>
        <end position="144" status="greater than"/>
    </location>
</feature>
<feature type="binding site" evidence="1">
    <location>
        <position position="10"/>
    </location>
    <ligand>
        <name>Mn(2+)</name>
        <dbReference type="ChEBI" id="CHEBI:29035"/>
    </ligand>
</feature>
<feature type="binding site" evidence="1">
    <location>
        <position position="58"/>
    </location>
    <ligand>
        <name>Mn(2+)</name>
        <dbReference type="ChEBI" id="CHEBI:29035"/>
    </ligand>
</feature>
<feature type="binding site" evidence="1">
    <location>
        <position position="143"/>
    </location>
    <ligand>
        <name>Mn(2+)</name>
        <dbReference type="ChEBI" id="CHEBI:29035"/>
    </ligand>
</feature>
<feature type="non-terminal residue">
    <location>
        <position position="1"/>
    </location>
</feature>
<feature type="non-terminal residue">
    <location>
        <position position="144"/>
    </location>
</feature>
<comment type="function">
    <text>Destroys superoxide anion radicals which are normally produced within the cells and which are toxic to biological systems.</text>
</comment>
<comment type="catalytic activity">
    <reaction>
        <text>2 superoxide + 2 H(+) = H2O2 + O2</text>
        <dbReference type="Rhea" id="RHEA:20696"/>
        <dbReference type="ChEBI" id="CHEBI:15378"/>
        <dbReference type="ChEBI" id="CHEBI:15379"/>
        <dbReference type="ChEBI" id="CHEBI:16240"/>
        <dbReference type="ChEBI" id="CHEBI:18421"/>
        <dbReference type="EC" id="1.15.1.1"/>
    </reaction>
</comment>
<comment type="cofactor">
    <cofactor evidence="1">
        <name>Mn(2+)</name>
        <dbReference type="ChEBI" id="CHEBI:29035"/>
    </cofactor>
    <text evidence="1">Binds 1 Mn(2+) ion per subunit.</text>
</comment>
<comment type="subunit">
    <text>Homotetramer.</text>
</comment>
<comment type="subcellular location">
    <subcellularLocation>
        <location>Mitochondrion matrix</location>
    </subcellularLocation>
</comment>
<comment type="similarity">
    <text evidence="2">Belongs to the iron/manganese superoxide dismutase family.</text>
</comment>